<sequence length="456" mass="49228">MSAQTGTDLFKIADLFAYQVFDSRGFPTVACVVKLASGHTGEAMVPSGASTGEKEAIELRDGDPKAYFGKGVSQAVQNVNQTIAPKLIGLNATDQAAIDALMIQLDGTPNKAKLGANAILAVSLAVAKAAASAQKTSLFKYLANQVMGLNKTEFILTVPMLNVINGGAHADNNIDFQEFMIMPLGANSMHQALKMASETFHALQKLLKQRGLNTNKGDEGGFAPNLKLAEEALDLMVEAIKAAGYQPGSDIAIALDVAASEFYDDTTKRYVFKKGIKAKILDEKEWSLTTAQMIAYLKKLTEQYPIISIEDGLSEHDWEGMETLTKTLGQHIQIVGDDLYCTNPAIAEKGVAHKATNSILIKLNQIGTLTETIKAINIAKDANWSQVISHRSGETEDTTIADLAVAACTGQIKTGSMSRSERIAKYNRLLQIELELGNNAKYLGWNTFKNIKPQKA</sequence>
<proteinExistence type="evidence at protein level"/>
<organism>
    <name type="scientific">Mycoplasma pneumoniae (strain ATCC 29342 / M129 / Subtype 1)</name>
    <name type="common">Mycoplasmoides pneumoniae</name>
    <dbReference type="NCBI Taxonomy" id="272634"/>
    <lineage>
        <taxon>Bacteria</taxon>
        <taxon>Bacillati</taxon>
        <taxon>Mycoplasmatota</taxon>
        <taxon>Mycoplasmoidales</taxon>
        <taxon>Mycoplasmoidaceae</taxon>
        <taxon>Mycoplasmoides</taxon>
    </lineage>
</organism>
<reference key="1">
    <citation type="journal article" date="1996" name="Nucleic Acids Res.">
        <title>Complete sequence analysis of the genome of the bacterium Mycoplasma pneumoniae.</title>
        <authorList>
            <person name="Himmelreich R."/>
            <person name="Hilbert H."/>
            <person name="Plagens H."/>
            <person name="Pirkl E."/>
            <person name="Li B.-C."/>
            <person name="Herrmann R."/>
        </authorList>
    </citation>
    <scope>NUCLEOTIDE SEQUENCE [LARGE SCALE GENOMIC DNA]</scope>
    <source>
        <strain>ATCC 29342 / M129 / Subtype 1</strain>
    </source>
</reference>
<reference key="2">
    <citation type="journal article" date="1996" name="Nucleic Acids Res.">
        <title>Sequence analysis of 56 kb from the genome of the bacterium Mycoplasma pneumoniae comprising the dnaA region, the atp operon and a cluster of ribosomal protein genes.</title>
        <authorList>
            <person name="Hilbert H."/>
            <person name="Himmelreich R."/>
            <person name="Plagens H."/>
            <person name="Herrmann R."/>
        </authorList>
    </citation>
    <scope>NUCLEOTIDE SEQUENCE [GENOMIC DNA] OF 309-456</scope>
    <source>
        <strain>ATCC 29342 / M129 / Subtype 1</strain>
    </source>
</reference>
<reference evidence="5" key="3">
    <citation type="journal article" date="2022" name="Front. Mol. Biosci.">
        <title>Evidence for the Rapid and Divergent Evolution of Mycoplasmas: Structural and Phylogenetic Analysis of Enolases.</title>
        <authorList>
            <person name="Chen R."/>
            <person name="Zhao L."/>
            <person name="Gan R."/>
            <person name="Feng Z."/>
            <person name="Cui C."/>
            <person name="Xie X."/>
            <person name="Hao F."/>
            <person name="Zhang Z."/>
            <person name="Wang L."/>
            <person name="Ran T."/>
            <person name="Wang W."/>
            <person name="Zhang S."/>
            <person name="Li Y."/>
            <person name="Zhang W."/>
            <person name="Pang M."/>
            <person name="Xiong Q."/>
            <person name="Shao G."/>
        </authorList>
    </citation>
    <scope>X-RAY CRYSTALLOGRAPHY (1.80 ANGSTROMS)</scope>
    <scope>SUBUNIT</scope>
    <scope>PLASMINOGEN-BINDING</scope>
</reference>
<name>ENO_MYCPN</name>
<gene>
    <name evidence="1" type="primary">eno</name>
    <name type="ordered locus">MPN_606</name>
    <name type="ORF">MP236</name>
</gene>
<comment type="function">
    <text evidence="1">Catalyzes the reversible conversion of 2-phosphoglycerate (2-PG) into phosphoenolpyruvate (PEP). It is essential for the degradation of carbohydrates via glycolysis.</text>
</comment>
<comment type="function">
    <text evidence="2 4">'Moonlights' as a plasminogen receptor. Binds plasminogen, but no fibronectin binding was observed (PubMed:35145997). Plasminogen binding increases bacterial adherence to host cells; plasmin activity leads to degradation of host extracellular matrix proteins, facilitating bacterial dissemination and disease spread (Probable).</text>
</comment>
<comment type="catalytic activity">
    <reaction evidence="1">
        <text>(2R)-2-phosphoglycerate = phosphoenolpyruvate + H2O</text>
        <dbReference type="Rhea" id="RHEA:10164"/>
        <dbReference type="ChEBI" id="CHEBI:15377"/>
        <dbReference type="ChEBI" id="CHEBI:58289"/>
        <dbReference type="ChEBI" id="CHEBI:58702"/>
        <dbReference type="EC" id="4.2.1.11"/>
    </reaction>
</comment>
<comment type="cofactor">
    <cofactor evidence="1">
        <name>Mg(2+)</name>
        <dbReference type="ChEBI" id="CHEBI:18420"/>
    </cofactor>
    <text evidence="1">Binds a second Mg(2+) ion via substrate during catalysis.</text>
</comment>
<comment type="pathway">
    <text evidence="1">Carbohydrate degradation; glycolysis; pyruvate from D-glyceraldehyde 3-phosphate: step 4/5.</text>
</comment>
<comment type="subunit">
    <text evidence="2">Homodimer (PubMed:35145997).</text>
</comment>
<comment type="subcellular location">
    <subcellularLocation>
        <location evidence="1">Cytoplasm</location>
    </subcellularLocation>
    <subcellularLocation>
        <location evidence="1">Secreted</location>
    </subcellularLocation>
    <subcellularLocation>
        <location evidence="1">Cell surface</location>
    </subcellularLocation>
    <text evidence="1">Fractions of enolase are present in both the cytoplasm and on the cell surface.</text>
</comment>
<comment type="similarity">
    <text evidence="1">Belongs to the enolase family.</text>
</comment>
<feature type="chain" id="PRO_0000133930" description="Enolase">
    <location>
        <begin position="1"/>
        <end position="456"/>
    </location>
</feature>
<feature type="active site" description="Proton donor" evidence="1">
    <location>
        <position position="219"/>
    </location>
</feature>
<feature type="active site" description="Proton acceptor" evidence="1">
    <location>
        <position position="362"/>
    </location>
</feature>
<feature type="binding site" evidence="1">
    <location>
        <position position="177"/>
    </location>
    <ligand>
        <name>(2R)-2-phosphoglycerate</name>
        <dbReference type="ChEBI" id="CHEBI:58289"/>
    </ligand>
</feature>
<feature type="binding site" evidence="1">
    <location>
        <position position="256"/>
    </location>
    <ligand>
        <name>Mg(2+)</name>
        <dbReference type="ChEBI" id="CHEBI:18420"/>
    </ligand>
</feature>
<feature type="binding site" evidence="1">
    <location>
        <position position="310"/>
    </location>
    <ligand>
        <name>Mg(2+)</name>
        <dbReference type="ChEBI" id="CHEBI:18420"/>
    </ligand>
</feature>
<feature type="binding site" evidence="1">
    <location>
        <position position="337"/>
    </location>
    <ligand>
        <name>Mg(2+)</name>
        <dbReference type="ChEBI" id="CHEBI:18420"/>
    </ligand>
</feature>
<feature type="binding site" evidence="1">
    <location>
        <position position="362"/>
    </location>
    <ligand>
        <name>(2R)-2-phosphoglycerate</name>
        <dbReference type="ChEBI" id="CHEBI:58289"/>
    </ligand>
</feature>
<feature type="binding site" evidence="1">
    <location>
        <position position="391"/>
    </location>
    <ligand>
        <name>(2R)-2-phosphoglycerate</name>
        <dbReference type="ChEBI" id="CHEBI:58289"/>
    </ligand>
</feature>
<feature type="binding site" evidence="1">
    <location>
        <position position="392"/>
    </location>
    <ligand>
        <name>(2R)-2-phosphoglycerate</name>
        <dbReference type="ChEBI" id="CHEBI:58289"/>
    </ligand>
</feature>
<feature type="binding site" evidence="1">
    <location>
        <position position="413"/>
    </location>
    <ligand>
        <name>(2R)-2-phosphoglycerate</name>
        <dbReference type="ChEBI" id="CHEBI:58289"/>
    </ligand>
</feature>
<feature type="sequence conflict" description="In Ref. 2; AAC43651." evidence="3" ref="2">
    <original>IED</original>
    <variation>HRS</variation>
    <location>
        <begin position="309"/>
        <end position="311"/>
    </location>
</feature>
<feature type="sequence conflict" description="In Ref. 2; AAC43651." evidence="3" ref="2">
    <original>TLGQHI</original>
    <variation>HWSTH</variation>
    <location>
        <begin position="327"/>
        <end position="332"/>
    </location>
</feature>
<feature type="strand" evidence="6">
    <location>
        <begin position="11"/>
        <end position="21"/>
    </location>
</feature>
<feature type="strand" evidence="6">
    <location>
        <begin position="27"/>
        <end position="35"/>
    </location>
</feature>
<feature type="strand" evidence="6">
    <location>
        <begin position="40"/>
        <end position="44"/>
    </location>
</feature>
<feature type="strand" evidence="6">
    <location>
        <begin position="53"/>
        <end position="55"/>
    </location>
</feature>
<feature type="helix" evidence="6">
    <location>
        <begin position="67"/>
        <end position="69"/>
    </location>
</feature>
<feature type="helix" evidence="6">
    <location>
        <begin position="73"/>
        <end position="81"/>
    </location>
</feature>
<feature type="helix" evidence="6">
    <location>
        <begin position="84"/>
        <end position="87"/>
    </location>
</feature>
<feature type="helix" evidence="6">
    <location>
        <begin position="95"/>
        <end position="106"/>
    </location>
</feature>
<feature type="turn" evidence="6">
    <location>
        <begin position="112"/>
        <end position="114"/>
    </location>
</feature>
<feature type="helix" evidence="6">
    <location>
        <begin position="116"/>
        <end position="133"/>
    </location>
</feature>
<feature type="helix" evidence="6">
    <location>
        <begin position="138"/>
        <end position="144"/>
    </location>
</feature>
<feature type="strand" evidence="6">
    <location>
        <begin position="152"/>
        <end position="155"/>
    </location>
</feature>
<feature type="strand" evidence="6">
    <location>
        <begin position="158"/>
        <end position="161"/>
    </location>
</feature>
<feature type="strand" evidence="6">
    <location>
        <begin position="171"/>
        <end position="173"/>
    </location>
</feature>
<feature type="strand" evidence="6">
    <location>
        <begin position="178"/>
        <end position="182"/>
    </location>
</feature>
<feature type="helix" evidence="6">
    <location>
        <begin position="189"/>
        <end position="209"/>
    </location>
</feature>
<feature type="strand" evidence="6">
    <location>
        <begin position="220"/>
        <end position="222"/>
    </location>
</feature>
<feature type="helix" evidence="6">
    <location>
        <begin position="229"/>
        <end position="242"/>
    </location>
</feature>
<feature type="turn" evidence="6">
    <location>
        <begin position="248"/>
        <end position="250"/>
    </location>
</feature>
<feature type="strand" evidence="6">
    <location>
        <begin position="251"/>
        <end position="256"/>
    </location>
</feature>
<feature type="helix" evidence="6">
    <location>
        <begin position="259"/>
        <end position="261"/>
    </location>
</feature>
<feature type="turn" evidence="6">
    <location>
        <begin position="265"/>
        <end position="268"/>
    </location>
</feature>
<feature type="strand" evidence="6">
    <location>
        <begin position="269"/>
        <end position="271"/>
    </location>
</feature>
<feature type="helix" evidence="6">
    <location>
        <begin position="273"/>
        <end position="277"/>
    </location>
</feature>
<feature type="turn" evidence="6">
    <location>
        <begin position="283"/>
        <end position="286"/>
    </location>
</feature>
<feature type="helix" evidence="6">
    <location>
        <begin position="290"/>
        <end position="303"/>
    </location>
</feature>
<feature type="strand" evidence="6">
    <location>
        <begin position="306"/>
        <end position="311"/>
    </location>
</feature>
<feature type="helix" evidence="6">
    <location>
        <begin position="318"/>
        <end position="328"/>
    </location>
</feature>
<feature type="turn" evidence="6">
    <location>
        <begin position="329"/>
        <end position="331"/>
    </location>
</feature>
<feature type="strand" evidence="6">
    <location>
        <begin position="332"/>
        <end position="337"/>
    </location>
</feature>
<feature type="turn" evidence="6">
    <location>
        <begin position="338"/>
        <end position="342"/>
    </location>
</feature>
<feature type="helix" evidence="6">
    <location>
        <begin position="344"/>
        <end position="353"/>
    </location>
</feature>
<feature type="strand" evidence="6">
    <location>
        <begin position="357"/>
        <end position="361"/>
    </location>
</feature>
<feature type="helix" evidence="6">
    <location>
        <begin position="363"/>
        <end position="366"/>
    </location>
</feature>
<feature type="helix" evidence="6">
    <location>
        <begin position="369"/>
        <end position="381"/>
    </location>
</feature>
<feature type="strand" evidence="6">
    <location>
        <begin position="385"/>
        <end position="389"/>
    </location>
</feature>
<feature type="helix" evidence="6">
    <location>
        <begin position="399"/>
        <end position="406"/>
    </location>
</feature>
<feature type="strand" evidence="6">
    <location>
        <begin position="411"/>
        <end position="413"/>
    </location>
</feature>
<feature type="strand" evidence="6">
    <location>
        <begin position="417"/>
        <end position="419"/>
    </location>
</feature>
<feature type="helix" evidence="6">
    <location>
        <begin position="420"/>
        <end position="436"/>
    </location>
</feature>
<feature type="helix" evidence="6">
    <location>
        <begin position="437"/>
        <end position="439"/>
    </location>
</feature>
<feature type="helix" evidence="6">
    <location>
        <begin position="444"/>
        <end position="447"/>
    </location>
</feature>
<feature type="strand" evidence="6">
    <location>
        <begin position="449"/>
        <end position="451"/>
    </location>
</feature>
<accession>P75189</accession>
<accession>Q50324</accession>
<dbReference type="EC" id="4.2.1.11" evidence="1"/>
<dbReference type="EMBL" id="U00089">
    <property type="protein sequence ID" value="AAB95884.1"/>
    <property type="molecule type" value="Genomic_DNA"/>
</dbReference>
<dbReference type="EMBL" id="U43738">
    <property type="protein sequence ID" value="AAC43651.1"/>
    <property type="molecule type" value="Genomic_DNA"/>
</dbReference>
<dbReference type="PIR" id="S73562">
    <property type="entry name" value="S73562"/>
</dbReference>
<dbReference type="RefSeq" id="NP_110295.1">
    <property type="nucleotide sequence ID" value="NC_000912.1"/>
</dbReference>
<dbReference type="RefSeq" id="WP_010874963.1">
    <property type="nucleotide sequence ID" value="NZ_OU342337.1"/>
</dbReference>
<dbReference type="PDB" id="7E2Q">
    <property type="method" value="X-ray"/>
    <property type="resolution" value="1.80 A"/>
    <property type="chains" value="A/B/C/D=1-456"/>
</dbReference>
<dbReference type="PDBsum" id="7E2Q"/>
<dbReference type="SMR" id="P75189"/>
<dbReference type="IntAct" id="P75189">
    <property type="interactions" value="6"/>
</dbReference>
<dbReference type="STRING" id="272634.MPN_606"/>
<dbReference type="EnsemblBacteria" id="AAB95884">
    <property type="protein sequence ID" value="AAB95884"/>
    <property type="gene ID" value="MPN_606"/>
</dbReference>
<dbReference type="GeneID" id="66608709"/>
<dbReference type="KEGG" id="mpn:MPN_606"/>
<dbReference type="PATRIC" id="fig|272634.6.peg.669"/>
<dbReference type="HOGENOM" id="CLU_031223_2_1_14"/>
<dbReference type="OrthoDB" id="9804716at2"/>
<dbReference type="BioCyc" id="MetaCyc:MONOMER-551"/>
<dbReference type="BioCyc" id="MPNE272634:G1GJ3-981-MONOMER"/>
<dbReference type="UniPathway" id="UPA00109">
    <property type="reaction ID" value="UER00187"/>
</dbReference>
<dbReference type="Proteomes" id="UP000000808">
    <property type="component" value="Chromosome"/>
</dbReference>
<dbReference type="GO" id="GO:0009986">
    <property type="term" value="C:cell surface"/>
    <property type="evidence" value="ECO:0007669"/>
    <property type="project" value="UniProtKB-SubCell"/>
</dbReference>
<dbReference type="GO" id="GO:0005829">
    <property type="term" value="C:cytosol"/>
    <property type="evidence" value="ECO:0000314"/>
    <property type="project" value="AgBase"/>
</dbReference>
<dbReference type="GO" id="GO:0005576">
    <property type="term" value="C:extracellular region"/>
    <property type="evidence" value="ECO:0007669"/>
    <property type="project" value="UniProtKB-SubCell"/>
</dbReference>
<dbReference type="GO" id="GO:0000015">
    <property type="term" value="C:phosphopyruvate hydratase complex"/>
    <property type="evidence" value="ECO:0007669"/>
    <property type="project" value="InterPro"/>
</dbReference>
<dbReference type="GO" id="GO:0000287">
    <property type="term" value="F:magnesium ion binding"/>
    <property type="evidence" value="ECO:0007669"/>
    <property type="project" value="UniProtKB-UniRule"/>
</dbReference>
<dbReference type="GO" id="GO:0004634">
    <property type="term" value="F:phosphopyruvate hydratase activity"/>
    <property type="evidence" value="ECO:0007669"/>
    <property type="project" value="UniProtKB-UniRule"/>
</dbReference>
<dbReference type="GO" id="GO:0006096">
    <property type="term" value="P:glycolytic process"/>
    <property type="evidence" value="ECO:0007669"/>
    <property type="project" value="UniProtKB-UniRule"/>
</dbReference>
<dbReference type="CDD" id="cd03313">
    <property type="entry name" value="enolase"/>
    <property type="match status" value="1"/>
</dbReference>
<dbReference type="FunFam" id="3.20.20.120:FF:000001">
    <property type="entry name" value="Enolase"/>
    <property type="match status" value="1"/>
</dbReference>
<dbReference type="FunFam" id="3.30.390.10:FF:000001">
    <property type="entry name" value="Enolase"/>
    <property type="match status" value="1"/>
</dbReference>
<dbReference type="Gene3D" id="3.20.20.120">
    <property type="entry name" value="Enolase-like C-terminal domain"/>
    <property type="match status" value="1"/>
</dbReference>
<dbReference type="Gene3D" id="3.30.390.10">
    <property type="entry name" value="Enolase-like, N-terminal domain"/>
    <property type="match status" value="1"/>
</dbReference>
<dbReference type="HAMAP" id="MF_00318">
    <property type="entry name" value="Enolase"/>
    <property type="match status" value="1"/>
</dbReference>
<dbReference type="InterPro" id="IPR000941">
    <property type="entry name" value="Enolase"/>
</dbReference>
<dbReference type="InterPro" id="IPR036849">
    <property type="entry name" value="Enolase-like_C_sf"/>
</dbReference>
<dbReference type="InterPro" id="IPR029017">
    <property type="entry name" value="Enolase-like_N"/>
</dbReference>
<dbReference type="InterPro" id="IPR020810">
    <property type="entry name" value="Enolase_C"/>
</dbReference>
<dbReference type="InterPro" id="IPR020809">
    <property type="entry name" value="Enolase_CS"/>
</dbReference>
<dbReference type="InterPro" id="IPR020811">
    <property type="entry name" value="Enolase_N"/>
</dbReference>
<dbReference type="NCBIfam" id="TIGR01060">
    <property type="entry name" value="eno"/>
    <property type="match status" value="1"/>
</dbReference>
<dbReference type="PANTHER" id="PTHR11902">
    <property type="entry name" value="ENOLASE"/>
    <property type="match status" value="1"/>
</dbReference>
<dbReference type="PANTHER" id="PTHR11902:SF1">
    <property type="entry name" value="ENOLASE"/>
    <property type="match status" value="1"/>
</dbReference>
<dbReference type="Pfam" id="PF00113">
    <property type="entry name" value="Enolase_C"/>
    <property type="match status" value="1"/>
</dbReference>
<dbReference type="Pfam" id="PF03952">
    <property type="entry name" value="Enolase_N"/>
    <property type="match status" value="1"/>
</dbReference>
<dbReference type="PIRSF" id="PIRSF001400">
    <property type="entry name" value="Enolase"/>
    <property type="match status" value="1"/>
</dbReference>
<dbReference type="PRINTS" id="PR00148">
    <property type="entry name" value="ENOLASE"/>
</dbReference>
<dbReference type="SFLD" id="SFLDS00001">
    <property type="entry name" value="Enolase"/>
    <property type="match status" value="1"/>
</dbReference>
<dbReference type="SFLD" id="SFLDF00002">
    <property type="entry name" value="enolase"/>
    <property type="match status" value="1"/>
</dbReference>
<dbReference type="SMART" id="SM01192">
    <property type="entry name" value="Enolase_C"/>
    <property type="match status" value="1"/>
</dbReference>
<dbReference type="SMART" id="SM01193">
    <property type="entry name" value="Enolase_N"/>
    <property type="match status" value="1"/>
</dbReference>
<dbReference type="SUPFAM" id="SSF51604">
    <property type="entry name" value="Enolase C-terminal domain-like"/>
    <property type="match status" value="1"/>
</dbReference>
<dbReference type="SUPFAM" id="SSF54826">
    <property type="entry name" value="Enolase N-terminal domain-like"/>
    <property type="match status" value="1"/>
</dbReference>
<dbReference type="PROSITE" id="PS00164">
    <property type="entry name" value="ENOLASE"/>
    <property type="match status" value="1"/>
</dbReference>
<evidence type="ECO:0000255" key="1">
    <source>
        <dbReference type="HAMAP-Rule" id="MF_00318"/>
    </source>
</evidence>
<evidence type="ECO:0000269" key="2">
    <source>
    </source>
</evidence>
<evidence type="ECO:0000305" key="3"/>
<evidence type="ECO:0000305" key="4">
    <source>
    </source>
</evidence>
<evidence type="ECO:0007744" key="5">
    <source>
        <dbReference type="PDB" id="7E2Q"/>
    </source>
</evidence>
<evidence type="ECO:0007829" key="6">
    <source>
        <dbReference type="PDB" id="7E2Q"/>
    </source>
</evidence>
<keyword id="KW-0002">3D-structure</keyword>
<keyword id="KW-0963">Cytoplasm</keyword>
<keyword id="KW-0324">Glycolysis</keyword>
<keyword id="KW-0456">Lyase</keyword>
<keyword id="KW-0460">Magnesium</keyword>
<keyword id="KW-0479">Metal-binding</keyword>
<keyword id="KW-1185">Reference proteome</keyword>
<keyword id="KW-0964">Secreted</keyword>
<protein>
    <recommendedName>
        <fullName evidence="1">Enolase</fullName>
        <ecNumber evidence="1">4.2.1.11</ecNumber>
    </recommendedName>
    <alternativeName>
        <fullName evidence="1">2-phospho-D-glycerate hydro-lyase</fullName>
    </alternativeName>
    <alternativeName>
        <fullName evidence="1">2-phosphoglycerate dehydratase</fullName>
    </alternativeName>
</protein>